<feature type="chain" id="PRO_0000191352" description="Transcription cofactor vestigial-like protein 4">
    <location>
        <begin position="1"/>
        <end position="287"/>
    </location>
</feature>
<feature type="region of interest" description="Disordered" evidence="3">
    <location>
        <begin position="44"/>
        <end position="68"/>
    </location>
</feature>
<feature type="region of interest" description="Disordered" evidence="3">
    <location>
        <begin position="251"/>
        <end position="287"/>
    </location>
</feature>
<feature type="compositionally biased region" description="Low complexity" evidence="3">
    <location>
        <begin position="275"/>
        <end position="287"/>
    </location>
</feature>
<feature type="modified residue" description="Phosphoserine" evidence="2">
    <location>
        <position position="58"/>
    </location>
</feature>
<feature type="modified residue" description="Phosphoserine" evidence="2">
    <location>
        <position position="271"/>
    </location>
</feature>
<feature type="helix" evidence="5">
    <location>
        <begin position="204"/>
        <end position="214"/>
    </location>
</feature>
<feature type="helix" evidence="5">
    <location>
        <begin position="215"/>
        <end position="217"/>
    </location>
</feature>
<feature type="strand" evidence="5">
    <location>
        <begin position="227"/>
        <end position="230"/>
    </location>
</feature>
<feature type="helix" evidence="6">
    <location>
        <begin position="234"/>
        <end position="251"/>
    </location>
</feature>
<name>VGLL4_MOUSE</name>
<gene>
    <name type="primary">Vgll4</name>
</gene>
<accession>Q80V24</accession>
<comment type="function">
    <text evidence="1">May act as a specific coactivator for the mammalian TEFs.</text>
</comment>
<comment type="subunit">
    <text evidence="1">Interacts with TEFs. Interacts with IRF2BP2 (By similarity).</text>
</comment>
<comment type="interaction">
    <interactant intactId="EBI-9253433">
        <id>Q80V24</id>
    </interactant>
    <interactant intactId="EBI-9253444">
        <id>Q62296</id>
        <label>Tead4</label>
    </interactant>
    <organismsDiffer>false</organismsDiffer>
    <experiments>3</experiments>
</comment>
<comment type="interaction">
    <interactant intactId="EBI-9253433">
        <id>Q80V24</id>
    </interactant>
    <interactant intactId="EBI-747736">
        <id>Q15561</id>
        <label>TEAD4</label>
    </interactant>
    <organismsDiffer>true</organismsDiffer>
    <experiments>3</experiments>
</comment>
<comment type="subcellular location">
    <subcellularLocation>
        <location evidence="1">Nucleus</location>
    </subcellularLocation>
</comment>
<comment type="similarity">
    <text evidence="4">Belongs to the vestigial family.</text>
</comment>
<protein>
    <recommendedName>
        <fullName>Transcription cofactor vestigial-like protein 4</fullName>
        <shortName>Vgl-4</shortName>
    </recommendedName>
</protein>
<dbReference type="EMBL" id="BC048841">
    <property type="protein sequence ID" value="AAH48841.1"/>
    <property type="molecule type" value="mRNA"/>
</dbReference>
<dbReference type="EMBL" id="BC060305">
    <property type="protein sequence ID" value="AAH60305.1"/>
    <property type="molecule type" value="mRNA"/>
</dbReference>
<dbReference type="CCDS" id="CCDS20436.1"/>
<dbReference type="RefSeq" id="NP_808351.1">
    <property type="nucleotide sequence ID" value="NM_177683.4"/>
</dbReference>
<dbReference type="PDB" id="4LN0">
    <property type="method" value="X-ray"/>
    <property type="resolution" value="2.90 A"/>
    <property type="chains" value="C=203-256"/>
</dbReference>
<dbReference type="PDB" id="6SBA">
    <property type="method" value="X-ray"/>
    <property type="resolution" value="1.30 A"/>
    <property type="chains" value="B=233-252"/>
</dbReference>
<dbReference type="PDBsum" id="4LN0"/>
<dbReference type="PDBsum" id="6SBA"/>
<dbReference type="SMR" id="Q80V24"/>
<dbReference type="BioGRID" id="231240">
    <property type="interactions" value="1"/>
</dbReference>
<dbReference type="FunCoup" id="Q80V24">
    <property type="interactions" value="2196"/>
</dbReference>
<dbReference type="IntAct" id="Q80V24">
    <property type="interactions" value="2"/>
</dbReference>
<dbReference type="STRING" id="10090.ENSMUSP00000032459"/>
<dbReference type="GlyGen" id="Q80V24">
    <property type="glycosylation" value="1 site, 1 O-linked glycan (1 site)"/>
</dbReference>
<dbReference type="iPTMnet" id="Q80V24"/>
<dbReference type="PhosphoSitePlus" id="Q80V24"/>
<dbReference type="jPOST" id="Q80V24"/>
<dbReference type="PaxDb" id="10090-ENSMUSP00000032459"/>
<dbReference type="PeptideAtlas" id="Q80V24"/>
<dbReference type="ProteomicsDB" id="297881"/>
<dbReference type="Pumba" id="Q80V24"/>
<dbReference type="Antibodypedia" id="26100">
    <property type="antibodies" value="159 antibodies from 24 providers"/>
</dbReference>
<dbReference type="Ensembl" id="ENSMUST00000032459.14">
    <property type="protein sequence ID" value="ENSMUSP00000032459.8"/>
    <property type="gene ID" value="ENSMUSG00000030315.16"/>
</dbReference>
<dbReference type="GeneID" id="232334"/>
<dbReference type="KEGG" id="mmu:232334"/>
<dbReference type="UCSC" id="uc009dif.2">
    <property type="organism name" value="mouse"/>
</dbReference>
<dbReference type="AGR" id="MGI:2652840"/>
<dbReference type="CTD" id="9686"/>
<dbReference type="MGI" id="MGI:2652840">
    <property type="gene designation" value="Vgll4"/>
</dbReference>
<dbReference type="VEuPathDB" id="HostDB:ENSMUSG00000030315"/>
<dbReference type="eggNOG" id="ENOG502QTV3">
    <property type="taxonomic scope" value="Eukaryota"/>
</dbReference>
<dbReference type="GeneTree" id="ENSGT00390000003282"/>
<dbReference type="HOGENOM" id="CLU_085402_0_0_1"/>
<dbReference type="InParanoid" id="Q80V24"/>
<dbReference type="OMA" id="CPIAHSS"/>
<dbReference type="OrthoDB" id="64467at9989"/>
<dbReference type="PhylomeDB" id="Q80V24"/>
<dbReference type="TreeFam" id="TF330846"/>
<dbReference type="BioGRID-ORCS" id="232334">
    <property type="hits" value="3 hits in 78 CRISPR screens"/>
</dbReference>
<dbReference type="ChiTaRS" id="Vgll4">
    <property type="organism name" value="mouse"/>
</dbReference>
<dbReference type="EvolutionaryTrace" id="Q80V24"/>
<dbReference type="PRO" id="PR:Q80V24"/>
<dbReference type="Proteomes" id="UP000000589">
    <property type="component" value="Chromosome 6"/>
</dbReference>
<dbReference type="RNAct" id="Q80V24">
    <property type="molecule type" value="protein"/>
</dbReference>
<dbReference type="Bgee" id="ENSMUSG00000030315">
    <property type="expression patterns" value="Expressed in rostral migratory stream and 191 other cell types or tissues"/>
</dbReference>
<dbReference type="ExpressionAtlas" id="Q80V24">
    <property type="expression patterns" value="baseline and differential"/>
</dbReference>
<dbReference type="GO" id="GO:0005634">
    <property type="term" value="C:nucleus"/>
    <property type="evidence" value="ECO:0000314"/>
    <property type="project" value="UniProtKB"/>
</dbReference>
<dbReference type="GO" id="GO:0060044">
    <property type="term" value="P:negative regulation of cardiac muscle cell proliferation"/>
    <property type="evidence" value="ECO:0000315"/>
    <property type="project" value="UniProtKB"/>
</dbReference>
<dbReference type="GO" id="GO:0030308">
    <property type="term" value="P:negative regulation of cell growth"/>
    <property type="evidence" value="ECO:0000250"/>
    <property type="project" value="UniProtKB"/>
</dbReference>
<dbReference type="GO" id="GO:0045892">
    <property type="term" value="P:negative regulation of DNA-templated transcription"/>
    <property type="evidence" value="ECO:0000314"/>
    <property type="project" value="UniProtKB"/>
</dbReference>
<dbReference type="GO" id="GO:0035331">
    <property type="term" value="P:negative regulation of hippo signaling"/>
    <property type="evidence" value="ECO:0000314"/>
    <property type="project" value="UniProtKB"/>
</dbReference>
<dbReference type="GO" id="GO:0030178">
    <property type="term" value="P:negative regulation of Wnt signaling pathway"/>
    <property type="evidence" value="ECO:0000250"/>
    <property type="project" value="UniProtKB"/>
</dbReference>
<dbReference type="GO" id="GO:0045732">
    <property type="term" value="P:positive regulation of protein catabolic process"/>
    <property type="evidence" value="ECO:0000314"/>
    <property type="project" value="UniProtKB"/>
</dbReference>
<dbReference type="IDEAL" id="IID50339"/>
<dbReference type="InterPro" id="IPR006627">
    <property type="entry name" value="TDU_repeat"/>
</dbReference>
<dbReference type="InterPro" id="IPR028184">
    <property type="entry name" value="VGLL4"/>
</dbReference>
<dbReference type="PANTHER" id="PTHR17604">
    <property type="entry name" value="TRANSCRIPTION COFACTOR VESTIGIAL-LIKE PROTEIN 4"/>
    <property type="match status" value="1"/>
</dbReference>
<dbReference type="PANTHER" id="PTHR17604:SF1">
    <property type="entry name" value="TRANSCRIPTION COFACTOR VESTIGIAL-LIKE PROTEIN 4"/>
    <property type="match status" value="1"/>
</dbReference>
<dbReference type="Pfam" id="PF15245">
    <property type="entry name" value="VGLL4"/>
    <property type="match status" value="1"/>
</dbReference>
<dbReference type="SMART" id="SM00711">
    <property type="entry name" value="TDU"/>
    <property type="match status" value="2"/>
</dbReference>
<proteinExistence type="evidence at protein level"/>
<evidence type="ECO:0000250" key="1"/>
<evidence type="ECO:0000250" key="2">
    <source>
        <dbReference type="UniProtKB" id="Q14135"/>
    </source>
</evidence>
<evidence type="ECO:0000256" key="3">
    <source>
        <dbReference type="SAM" id="MobiDB-lite"/>
    </source>
</evidence>
<evidence type="ECO:0000305" key="4"/>
<evidence type="ECO:0007829" key="5">
    <source>
        <dbReference type="PDB" id="4LN0"/>
    </source>
</evidence>
<evidence type="ECO:0007829" key="6">
    <source>
        <dbReference type="PDB" id="6SBA"/>
    </source>
</evidence>
<reference key="1">
    <citation type="journal article" date="2004" name="Genome Res.">
        <title>The status, quality, and expansion of the NIH full-length cDNA project: the Mammalian Gene Collection (MGC).</title>
        <authorList>
            <consortium name="The MGC Project Team"/>
        </authorList>
    </citation>
    <scope>NUCLEOTIDE SEQUENCE [LARGE SCALE MRNA]</scope>
    <source>
        <strain>FVB/N</strain>
        <tissue>Mammary tumor</tissue>
    </source>
</reference>
<sequence length="287" mass="30999">MLFMKMDLLNYQYLDKMNNNIGVLCYEGEASLRGEPRMQTLPVASALSSHRTGPPPISPSKRKFSMEPGDKDLDCENDHVSKMSRIFSPHLNKTVNGDCRRDPRERSRSPIERAAAPAVSLHGGHLYASLPSLMEQPLALTKNSSDTGRSAVERQQNRPSVITCASAGARNCNLSHCPIAHSGCSAPGSASYRRPPSATATCDPVVEEHFRRSLGKNYKEPEPAPNSVSITGSVDDHFAKALGDTWLQIKAAKDSASSSPESASRRGQPASPTAHMVSHSHSPSVVS</sequence>
<keyword id="KW-0002">3D-structure</keyword>
<keyword id="KW-0539">Nucleus</keyword>
<keyword id="KW-0597">Phosphoprotein</keyword>
<keyword id="KW-1185">Reference proteome</keyword>
<keyword id="KW-0804">Transcription</keyword>
<keyword id="KW-0805">Transcription regulation</keyword>
<organism>
    <name type="scientific">Mus musculus</name>
    <name type="common">Mouse</name>
    <dbReference type="NCBI Taxonomy" id="10090"/>
    <lineage>
        <taxon>Eukaryota</taxon>
        <taxon>Metazoa</taxon>
        <taxon>Chordata</taxon>
        <taxon>Craniata</taxon>
        <taxon>Vertebrata</taxon>
        <taxon>Euteleostomi</taxon>
        <taxon>Mammalia</taxon>
        <taxon>Eutheria</taxon>
        <taxon>Euarchontoglires</taxon>
        <taxon>Glires</taxon>
        <taxon>Rodentia</taxon>
        <taxon>Myomorpha</taxon>
        <taxon>Muroidea</taxon>
        <taxon>Muridae</taxon>
        <taxon>Murinae</taxon>
        <taxon>Mus</taxon>
        <taxon>Mus</taxon>
    </lineage>
</organism>